<organism>
    <name type="scientific">Mesomycoplasma hyopneumoniae (strain 232)</name>
    <name type="common">Mycoplasma hyopneumoniae</name>
    <dbReference type="NCBI Taxonomy" id="295358"/>
    <lineage>
        <taxon>Bacteria</taxon>
        <taxon>Bacillati</taxon>
        <taxon>Mycoplasmatota</taxon>
        <taxon>Mycoplasmoidales</taxon>
        <taxon>Metamycoplasmataceae</taxon>
        <taxon>Mesomycoplasma</taxon>
    </lineage>
</organism>
<proteinExistence type="inferred from homology"/>
<comment type="function">
    <text evidence="1">One of the primary rRNA binding proteins, this protein initially binds near the 5'-end of the 23S rRNA. It is important during the early stages of 50S assembly. It makes multiple contacts with different domains of the 23S rRNA in the assembled 50S subunit and ribosome.</text>
</comment>
<comment type="function">
    <text evidence="1">Forms part of the polypeptide exit tunnel.</text>
</comment>
<comment type="subunit">
    <text evidence="1">Part of the 50S ribosomal subunit.</text>
</comment>
<comment type="similarity">
    <text evidence="1">Belongs to the universal ribosomal protein uL4 family.</text>
</comment>
<name>RL4_MESH2</name>
<reference key="1">
    <citation type="journal article" date="2004" name="J. Bacteriol.">
        <title>The genome sequence of Mycoplasma hyopneumoniae strain 232, the agent of swine mycoplasmosis.</title>
        <authorList>
            <person name="Minion F.C."/>
            <person name="Lefkowitz E.J."/>
            <person name="Madsen M.L."/>
            <person name="Cleary B.J."/>
            <person name="Swartzell S.M."/>
            <person name="Mahairas G.G."/>
        </authorList>
    </citation>
    <scope>NUCLEOTIDE SEQUENCE [LARGE SCALE GENOMIC DNA]</scope>
    <source>
        <strain>232</strain>
    </source>
</reference>
<feature type="chain" id="PRO_0000242396" description="Large ribosomal subunit protein uL4">
    <location>
        <begin position="1"/>
        <end position="214"/>
    </location>
</feature>
<feature type="region of interest" description="Disordered" evidence="2">
    <location>
        <begin position="56"/>
        <end position="86"/>
    </location>
</feature>
<feature type="compositionally biased region" description="Basic residues" evidence="2">
    <location>
        <begin position="71"/>
        <end position="85"/>
    </location>
</feature>
<evidence type="ECO:0000255" key="1">
    <source>
        <dbReference type="HAMAP-Rule" id="MF_01328"/>
    </source>
</evidence>
<evidence type="ECO:0000256" key="2">
    <source>
        <dbReference type="SAM" id="MobiDB-lite"/>
    </source>
</evidence>
<evidence type="ECO:0000305" key="3"/>
<dbReference type="EMBL" id="AE017332">
    <property type="protein sequence ID" value="AAV27445.1"/>
    <property type="molecule type" value="Genomic_DNA"/>
</dbReference>
<dbReference type="RefSeq" id="WP_011206025.1">
    <property type="nucleotide sequence ID" value="NC_006360.1"/>
</dbReference>
<dbReference type="SMR" id="Q601L4"/>
<dbReference type="GeneID" id="41334492"/>
<dbReference type="KEGG" id="mhy:mhp188"/>
<dbReference type="eggNOG" id="COG0088">
    <property type="taxonomic scope" value="Bacteria"/>
</dbReference>
<dbReference type="HOGENOM" id="CLU_041575_2_1_14"/>
<dbReference type="PhylomeDB" id="Q601L4"/>
<dbReference type="Proteomes" id="UP000006822">
    <property type="component" value="Chromosome"/>
</dbReference>
<dbReference type="GO" id="GO:1990904">
    <property type="term" value="C:ribonucleoprotein complex"/>
    <property type="evidence" value="ECO:0007669"/>
    <property type="project" value="UniProtKB-KW"/>
</dbReference>
<dbReference type="GO" id="GO:0005840">
    <property type="term" value="C:ribosome"/>
    <property type="evidence" value="ECO:0007669"/>
    <property type="project" value="UniProtKB-KW"/>
</dbReference>
<dbReference type="GO" id="GO:0019843">
    <property type="term" value="F:rRNA binding"/>
    <property type="evidence" value="ECO:0007669"/>
    <property type="project" value="UniProtKB-UniRule"/>
</dbReference>
<dbReference type="GO" id="GO:0003735">
    <property type="term" value="F:structural constituent of ribosome"/>
    <property type="evidence" value="ECO:0007669"/>
    <property type="project" value="InterPro"/>
</dbReference>
<dbReference type="GO" id="GO:0006412">
    <property type="term" value="P:translation"/>
    <property type="evidence" value="ECO:0007669"/>
    <property type="project" value="UniProtKB-UniRule"/>
</dbReference>
<dbReference type="Gene3D" id="3.40.1370.10">
    <property type="match status" value="1"/>
</dbReference>
<dbReference type="HAMAP" id="MF_01328_B">
    <property type="entry name" value="Ribosomal_uL4_B"/>
    <property type="match status" value="1"/>
</dbReference>
<dbReference type="InterPro" id="IPR002136">
    <property type="entry name" value="Ribosomal_uL4"/>
</dbReference>
<dbReference type="InterPro" id="IPR013005">
    <property type="entry name" value="Ribosomal_uL4-like"/>
</dbReference>
<dbReference type="InterPro" id="IPR023574">
    <property type="entry name" value="Ribosomal_uL4_dom_sf"/>
</dbReference>
<dbReference type="NCBIfam" id="TIGR03953">
    <property type="entry name" value="rplD_bact"/>
    <property type="match status" value="1"/>
</dbReference>
<dbReference type="PANTHER" id="PTHR10746">
    <property type="entry name" value="50S RIBOSOMAL PROTEIN L4"/>
    <property type="match status" value="1"/>
</dbReference>
<dbReference type="PANTHER" id="PTHR10746:SF6">
    <property type="entry name" value="LARGE RIBOSOMAL SUBUNIT PROTEIN UL4M"/>
    <property type="match status" value="1"/>
</dbReference>
<dbReference type="Pfam" id="PF00573">
    <property type="entry name" value="Ribosomal_L4"/>
    <property type="match status" value="1"/>
</dbReference>
<dbReference type="SUPFAM" id="SSF52166">
    <property type="entry name" value="Ribosomal protein L4"/>
    <property type="match status" value="1"/>
</dbReference>
<gene>
    <name evidence="1" type="primary">rplD</name>
    <name type="ordered locus">mhp188</name>
</gene>
<keyword id="KW-0687">Ribonucleoprotein</keyword>
<keyword id="KW-0689">Ribosomal protein</keyword>
<keyword id="KW-0694">RNA-binding</keyword>
<keyword id="KW-0699">rRNA-binding</keyword>
<protein>
    <recommendedName>
        <fullName evidence="1">Large ribosomal subunit protein uL4</fullName>
    </recommendedName>
    <alternativeName>
        <fullName evidence="3">50S ribosomal protein L4</fullName>
    </alternativeName>
</protein>
<accession>Q601L4</accession>
<sequence>MNKISEISIQSQKTENLVKFNANDDLPKSLFEQKEPHFQAIFDSILSERASKRLSTHKVKNRAEVSGTGKKPWKQKSTGKARAGSKRSPIFVGGGRAFGPTTQRNYNLKVNKKVKKLAFISALSQLAQNQQILVNDFSMNKISTKLLVDQLKIFKIDQLRHILIASSDPNLFLSARNLPNVELVKTNSLTVESLIKADLLIISKNEITNLEKRI</sequence>